<proteinExistence type="evidence at transcript level"/>
<evidence type="ECO:0000250" key="1"/>
<evidence type="ECO:0000255" key="2"/>
<evidence type="ECO:0000256" key="3">
    <source>
        <dbReference type="SAM" id="MobiDB-lite"/>
    </source>
</evidence>
<evidence type="ECO:0000269" key="4">
    <source>
    </source>
</evidence>
<evidence type="ECO:0000305" key="5"/>
<reference key="1">
    <citation type="submission" date="2000-08" db="EMBL/GenBank/DDBJ databases">
        <title>Isolation and expression of connexin-62: a novel human connexin with high homology to mouse connexin-57 and porcine connexin-60.</title>
        <authorList>
            <person name="Houseman M.J."/>
            <person name="Kelsell D.P."/>
            <person name="Mueller R.F."/>
        </authorList>
    </citation>
    <scope>NUCLEOTIDE SEQUENCE [MRNA]</scope>
</reference>
<reference key="2">
    <citation type="journal article" date="2002" name="Biol. Chem.">
        <title>Structural and functional diversity of connexin genes in the mouse and human genome.</title>
        <authorList>
            <person name="Willecke K."/>
            <person name="Eiberger J."/>
            <person name="Degen J."/>
            <person name="Eckardt D."/>
            <person name="Romualdi A."/>
            <person name="Guldenagel M."/>
            <person name="Deutsch U."/>
            <person name="Soehl G."/>
        </authorList>
    </citation>
    <scope>NUCLEOTIDE SEQUENCE [GENOMIC DNA]</scope>
</reference>
<reference key="3">
    <citation type="journal article" date="2003" name="Nature">
        <title>The DNA sequence and analysis of human chromosome 6.</title>
        <authorList>
            <person name="Mungall A.J."/>
            <person name="Palmer S.A."/>
            <person name="Sims S.K."/>
            <person name="Edwards C.A."/>
            <person name="Ashurst J.L."/>
            <person name="Wilming L."/>
            <person name="Jones M.C."/>
            <person name="Horton R."/>
            <person name="Hunt S.E."/>
            <person name="Scott C.E."/>
            <person name="Gilbert J.G.R."/>
            <person name="Clamp M.E."/>
            <person name="Bethel G."/>
            <person name="Milne S."/>
            <person name="Ainscough R."/>
            <person name="Almeida J.P."/>
            <person name="Ambrose K.D."/>
            <person name="Andrews T.D."/>
            <person name="Ashwell R.I.S."/>
            <person name="Babbage A.K."/>
            <person name="Bagguley C.L."/>
            <person name="Bailey J."/>
            <person name="Banerjee R."/>
            <person name="Barker D.J."/>
            <person name="Barlow K.F."/>
            <person name="Bates K."/>
            <person name="Beare D.M."/>
            <person name="Beasley H."/>
            <person name="Beasley O."/>
            <person name="Bird C.P."/>
            <person name="Blakey S.E."/>
            <person name="Bray-Allen S."/>
            <person name="Brook J."/>
            <person name="Brown A.J."/>
            <person name="Brown J.Y."/>
            <person name="Burford D.C."/>
            <person name="Burrill W."/>
            <person name="Burton J."/>
            <person name="Carder C."/>
            <person name="Carter N.P."/>
            <person name="Chapman J.C."/>
            <person name="Clark S.Y."/>
            <person name="Clark G."/>
            <person name="Clee C.M."/>
            <person name="Clegg S."/>
            <person name="Cobley V."/>
            <person name="Collier R.E."/>
            <person name="Collins J.E."/>
            <person name="Colman L.K."/>
            <person name="Corby N.R."/>
            <person name="Coville G.J."/>
            <person name="Culley K.M."/>
            <person name="Dhami P."/>
            <person name="Davies J."/>
            <person name="Dunn M."/>
            <person name="Earthrowl M.E."/>
            <person name="Ellington A.E."/>
            <person name="Evans K.A."/>
            <person name="Faulkner L."/>
            <person name="Francis M.D."/>
            <person name="Frankish A."/>
            <person name="Frankland J."/>
            <person name="French L."/>
            <person name="Garner P."/>
            <person name="Garnett J."/>
            <person name="Ghori M.J."/>
            <person name="Gilby L.M."/>
            <person name="Gillson C.J."/>
            <person name="Glithero R.J."/>
            <person name="Grafham D.V."/>
            <person name="Grant M."/>
            <person name="Gribble S."/>
            <person name="Griffiths C."/>
            <person name="Griffiths M.N.D."/>
            <person name="Hall R."/>
            <person name="Halls K.S."/>
            <person name="Hammond S."/>
            <person name="Harley J.L."/>
            <person name="Hart E.A."/>
            <person name="Heath P.D."/>
            <person name="Heathcott R."/>
            <person name="Holmes S.J."/>
            <person name="Howden P.J."/>
            <person name="Howe K.L."/>
            <person name="Howell G.R."/>
            <person name="Huckle E."/>
            <person name="Humphray S.J."/>
            <person name="Humphries M.D."/>
            <person name="Hunt A.R."/>
            <person name="Johnson C.M."/>
            <person name="Joy A.A."/>
            <person name="Kay M."/>
            <person name="Keenan S.J."/>
            <person name="Kimberley A.M."/>
            <person name="King A."/>
            <person name="Laird G.K."/>
            <person name="Langford C."/>
            <person name="Lawlor S."/>
            <person name="Leongamornlert D.A."/>
            <person name="Leversha M."/>
            <person name="Lloyd C.R."/>
            <person name="Lloyd D.M."/>
            <person name="Loveland J.E."/>
            <person name="Lovell J."/>
            <person name="Martin S."/>
            <person name="Mashreghi-Mohammadi M."/>
            <person name="Maslen G.L."/>
            <person name="Matthews L."/>
            <person name="McCann O.T."/>
            <person name="McLaren S.J."/>
            <person name="McLay K."/>
            <person name="McMurray A."/>
            <person name="Moore M.J.F."/>
            <person name="Mullikin J.C."/>
            <person name="Niblett D."/>
            <person name="Nickerson T."/>
            <person name="Novik K.L."/>
            <person name="Oliver K."/>
            <person name="Overton-Larty E.K."/>
            <person name="Parker A."/>
            <person name="Patel R."/>
            <person name="Pearce A.V."/>
            <person name="Peck A.I."/>
            <person name="Phillimore B.J.C.T."/>
            <person name="Phillips S."/>
            <person name="Plumb R.W."/>
            <person name="Porter K.M."/>
            <person name="Ramsey Y."/>
            <person name="Ranby S.A."/>
            <person name="Rice C.M."/>
            <person name="Ross M.T."/>
            <person name="Searle S.M."/>
            <person name="Sehra H.K."/>
            <person name="Sheridan E."/>
            <person name="Skuce C.D."/>
            <person name="Smith S."/>
            <person name="Smith M."/>
            <person name="Spraggon L."/>
            <person name="Squares S.L."/>
            <person name="Steward C.A."/>
            <person name="Sycamore N."/>
            <person name="Tamlyn-Hall G."/>
            <person name="Tester J."/>
            <person name="Theaker A.J."/>
            <person name="Thomas D.W."/>
            <person name="Thorpe A."/>
            <person name="Tracey A."/>
            <person name="Tromans A."/>
            <person name="Tubby B."/>
            <person name="Wall M."/>
            <person name="Wallis J.M."/>
            <person name="West A.P."/>
            <person name="White S.S."/>
            <person name="Whitehead S.L."/>
            <person name="Whittaker H."/>
            <person name="Wild A."/>
            <person name="Willey D.J."/>
            <person name="Wilmer T.E."/>
            <person name="Wood J.M."/>
            <person name="Wray P.W."/>
            <person name="Wyatt J.C."/>
            <person name="Young L."/>
            <person name="Younger R.M."/>
            <person name="Bentley D.R."/>
            <person name="Coulson A."/>
            <person name="Durbin R.M."/>
            <person name="Hubbard T."/>
            <person name="Sulston J.E."/>
            <person name="Dunham I."/>
            <person name="Rogers J."/>
            <person name="Beck S."/>
        </authorList>
    </citation>
    <scope>NUCLEOTIDE SEQUENCE [LARGE SCALE GENOMIC DNA]</scope>
</reference>
<reference key="4">
    <citation type="submission" date="2005-09" db="EMBL/GenBank/DDBJ databases">
        <authorList>
            <person name="Mural R.J."/>
            <person name="Istrail S."/>
            <person name="Sutton G.G."/>
            <person name="Florea L."/>
            <person name="Halpern A.L."/>
            <person name="Mobarry C.M."/>
            <person name="Lippert R."/>
            <person name="Walenz B."/>
            <person name="Shatkay H."/>
            <person name="Dew I."/>
            <person name="Miller J.R."/>
            <person name="Flanigan M.J."/>
            <person name="Edwards N.J."/>
            <person name="Bolanos R."/>
            <person name="Fasulo D."/>
            <person name="Halldorsson B.V."/>
            <person name="Hannenhalli S."/>
            <person name="Turner R."/>
            <person name="Yooseph S."/>
            <person name="Lu F."/>
            <person name="Nusskern D.R."/>
            <person name="Shue B.C."/>
            <person name="Zheng X.H."/>
            <person name="Zhong F."/>
            <person name="Delcher A.L."/>
            <person name="Huson D.H."/>
            <person name="Kravitz S.A."/>
            <person name="Mouchard L."/>
            <person name="Reinert K."/>
            <person name="Remington K.A."/>
            <person name="Clark A.G."/>
            <person name="Waterman M.S."/>
            <person name="Eichler E.E."/>
            <person name="Adams M.D."/>
            <person name="Hunkapiller M.W."/>
            <person name="Myers E.W."/>
            <person name="Venter J.C."/>
        </authorList>
    </citation>
    <scope>NUCLEOTIDE SEQUENCE [LARGE SCALE GENOMIC DNA]</scope>
</reference>
<reference key="5">
    <citation type="journal article" date="2003" name="Cell Commun. Adhes.">
        <title>Expression profiles of the novel human connexin genes hCx30.2, hCx40.1, and hCx62 differ from their putative mouse orthologues.</title>
        <authorList>
            <person name="Soehl G."/>
            <person name="Nielsen P.A."/>
            <person name="Eiberger J."/>
            <person name="Willecke K."/>
        </authorList>
    </citation>
    <scope>TISSUE SPECIFICITY</scope>
</reference>
<protein>
    <recommendedName>
        <fullName>Gap junction alpha-10 protein</fullName>
    </recommendedName>
    <alternativeName>
        <fullName>Connexin-62</fullName>
        <shortName>Cx62</shortName>
    </alternativeName>
</protein>
<organism>
    <name type="scientific">Homo sapiens</name>
    <name type="common">Human</name>
    <dbReference type="NCBI Taxonomy" id="9606"/>
    <lineage>
        <taxon>Eukaryota</taxon>
        <taxon>Metazoa</taxon>
        <taxon>Chordata</taxon>
        <taxon>Craniata</taxon>
        <taxon>Vertebrata</taxon>
        <taxon>Euteleostomi</taxon>
        <taxon>Mammalia</taxon>
        <taxon>Eutheria</taxon>
        <taxon>Euarchontoglires</taxon>
        <taxon>Primates</taxon>
        <taxon>Haplorrhini</taxon>
        <taxon>Catarrhini</taxon>
        <taxon>Hominidae</taxon>
        <taxon>Homo</taxon>
    </lineage>
</organism>
<keyword id="KW-0965">Cell junction</keyword>
<keyword id="KW-1003">Cell membrane</keyword>
<keyword id="KW-0303">Gap junction</keyword>
<keyword id="KW-0472">Membrane</keyword>
<keyword id="KW-1185">Reference proteome</keyword>
<keyword id="KW-0812">Transmembrane</keyword>
<keyword id="KW-1133">Transmembrane helix</keyword>
<dbReference type="EMBL" id="AF296766">
    <property type="protein sequence ID" value="AAK51676.1"/>
    <property type="molecule type" value="mRNA"/>
</dbReference>
<dbReference type="EMBL" id="AJ414565">
    <property type="protein sequence ID" value="CAC93847.1"/>
    <property type="molecule type" value="Genomic_DNA"/>
</dbReference>
<dbReference type="EMBL" id="AL353692">
    <property type="status" value="NOT_ANNOTATED_CDS"/>
    <property type="molecule type" value="Genomic_DNA"/>
</dbReference>
<dbReference type="EMBL" id="CH471051">
    <property type="protein sequence ID" value="EAW48537.1"/>
    <property type="molecule type" value="Genomic_DNA"/>
</dbReference>
<dbReference type="CCDS" id="CCDS5025.1"/>
<dbReference type="RefSeq" id="NP_115991.1">
    <property type="nucleotide sequence ID" value="NM_032602.2"/>
</dbReference>
<dbReference type="SMR" id="Q969M2"/>
<dbReference type="BioGRID" id="124209">
    <property type="interactions" value="16"/>
</dbReference>
<dbReference type="FunCoup" id="Q969M2">
    <property type="interactions" value="32"/>
</dbReference>
<dbReference type="IntAct" id="Q969M2">
    <property type="interactions" value="5"/>
</dbReference>
<dbReference type="STRING" id="9606.ENSP00000358358"/>
<dbReference type="BioMuta" id="GJA10"/>
<dbReference type="DMDM" id="74751723"/>
<dbReference type="jPOST" id="Q969M2"/>
<dbReference type="MassIVE" id="Q969M2"/>
<dbReference type="PaxDb" id="9606-ENSP00000358358"/>
<dbReference type="PeptideAtlas" id="Q969M2"/>
<dbReference type="ProteomicsDB" id="75791"/>
<dbReference type="Antibodypedia" id="56329">
    <property type="antibodies" value="55 antibodies from 12 providers"/>
</dbReference>
<dbReference type="DNASU" id="84694"/>
<dbReference type="Ensembl" id="ENST00000369352.1">
    <property type="protein sequence ID" value="ENSP00000358358.1"/>
    <property type="gene ID" value="ENSG00000135355.4"/>
</dbReference>
<dbReference type="Ensembl" id="ENST00000672086.1">
    <property type="protein sequence ID" value="ENSP00000500643.1"/>
    <property type="gene ID" value="ENSG00000288435.1"/>
</dbReference>
<dbReference type="GeneID" id="84694"/>
<dbReference type="KEGG" id="hsa:84694"/>
<dbReference type="MANE-Select" id="ENST00000369352.1">
    <property type="protein sequence ID" value="ENSP00000358358.1"/>
    <property type="RefSeq nucleotide sequence ID" value="NM_032602.2"/>
    <property type="RefSeq protein sequence ID" value="NP_115991.1"/>
</dbReference>
<dbReference type="UCSC" id="uc011eaa.3">
    <property type="organism name" value="human"/>
</dbReference>
<dbReference type="AGR" id="HGNC:16995"/>
<dbReference type="CTD" id="84694"/>
<dbReference type="DisGeNET" id="84694"/>
<dbReference type="GeneCards" id="GJA10"/>
<dbReference type="HGNC" id="HGNC:16995">
    <property type="gene designation" value="GJA10"/>
</dbReference>
<dbReference type="HPA" id="ENSG00000135355">
    <property type="expression patterns" value="Not detected"/>
</dbReference>
<dbReference type="MIM" id="611924">
    <property type="type" value="gene"/>
</dbReference>
<dbReference type="neXtProt" id="NX_Q969M2"/>
<dbReference type="OpenTargets" id="ENSG00000135355"/>
<dbReference type="PharmGKB" id="PA164741581"/>
<dbReference type="VEuPathDB" id="HostDB:ENSG00000135355"/>
<dbReference type="eggNOG" id="ENOG502QQPH">
    <property type="taxonomic scope" value="Eukaryota"/>
</dbReference>
<dbReference type="GeneTree" id="ENSGT01090000260070"/>
<dbReference type="HOGENOM" id="CLU_037388_1_0_1"/>
<dbReference type="InParanoid" id="Q969M2"/>
<dbReference type="OMA" id="SPCPWDD"/>
<dbReference type="OrthoDB" id="9939271at2759"/>
<dbReference type="PAN-GO" id="Q969M2">
    <property type="GO annotations" value="3 GO annotations based on evolutionary models"/>
</dbReference>
<dbReference type="PhylomeDB" id="Q969M2"/>
<dbReference type="TreeFam" id="TF329606"/>
<dbReference type="PathwayCommons" id="Q969M2"/>
<dbReference type="Reactome" id="R-HSA-112303">
    <property type="pathway name" value="Electric Transmission Across Gap Junctions"/>
</dbReference>
<dbReference type="Reactome" id="R-HSA-190861">
    <property type="pathway name" value="Gap junction assembly"/>
</dbReference>
<dbReference type="SignaLink" id="Q969M2"/>
<dbReference type="BioGRID-ORCS" id="84694">
    <property type="hits" value="8 hits in 1136 CRISPR screens"/>
</dbReference>
<dbReference type="ChiTaRS" id="GJA10">
    <property type="organism name" value="human"/>
</dbReference>
<dbReference type="GeneWiki" id="GJA10"/>
<dbReference type="GenomeRNAi" id="84694"/>
<dbReference type="Pharos" id="Q969M2">
    <property type="development level" value="Tdark"/>
</dbReference>
<dbReference type="PRO" id="PR:Q969M2"/>
<dbReference type="Proteomes" id="UP000005640">
    <property type="component" value="Chromosome 6"/>
</dbReference>
<dbReference type="RNAct" id="Q969M2">
    <property type="molecule type" value="protein"/>
</dbReference>
<dbReference type="Bgee" id="ENSG00000135355">
    <property type="expression patterns" value="Expressed in male germ line stem cell (sensu Vertebrata) in testis and 4 other cell types or tissues"/>
</dbReference>
<dbReference type="ExpressionAtlas" id="Q969M2">
    <property type="expression patterns" value="baseline and differential"/>
</dbReference>
<dbReference type="GO" id="GO:0005922">
    <property type="term" value="C:connexin complex"/>
    <property type="evidence" value="ECO:0000318"/>
    <property type="project" value="GO_Central"/>
</dbReference>
<dbReference type="GO" id="GO:0005886">
    <property type="term" value="C:plasma membrane"/>
    <property type="evidence" value="ECO:0000304"/>
    <property type="project" value="Reactome"/>
</dbReference>
<dbReference type="GO" id="GO:0005243">
    <property type="term" value="F:gap junction channel activity"/>
    <property type="evidence" value="ECO:0000318"/>
    <property type="project" value="GO_Central"/>
</dbReference>
<dbReference type="GO" id="GO:0007267">
    <property type="term" value="P:cell-cell signaling"/>
    <property type="evidence" value="ECO:0000318"/>
    <property type="project" value="GO_Central"/>
</dbReference>
<dbReference type="GO" id="GO:0050908">
    <property type="term" value="P:detection of light stimulus involved in visual perception"/>
    <property type="evidence" value="ECO:0007669"/>
    <property type="project" value="Ensembl"/>
</dbReference>
<dbReference type="GO" id="GO:0007276">
    <property type="term" value="P:gamete generation"/>
    <property type="evidence" value="ECO:0007669"/>
    <property type="project" value="Ensembl"/>
</dbReference>
<dbReference type="GO" id="GO:0007416">
    <property type="term" value="P:synapse assembly"/>
    <property type="evidence" value="ECO:0007669"/>
    <property type="project" value="Ensembl"/>
</dbReference>
<dbReference type="FunFam" id="1.20.1440.80:FF:000001">
    <property type="entry name" value="Gap junction alpha-1"/>
    <property type="match status" value="1"/>
</dbReference>
<dbReference type="Gene3D" id="1.20.1440.80">
    <property type="entry name" value="Gap junction channel protein cysteine-rich domain"/>
    <property type="match status" value="1"/>
</dbReference>
<dbReference type="InterPro" id="IPR000500">
    <property type="entry name" value="Connexin"/>
</dbReference>
<dbReference type="InterPro" id="IPR019570">
    <property type="entry name" value="Connexin_CCC"/>
</dbReference>
<dbReference type="InterPro" id="IPR017990">
    <property type="entry name" value="Connexin_CS"/>
</dbReference>
<dbReference type="InterPro" id="IPR013092">
    <property type="entry name" value="Connexin_N"/>
</dbReference>
<dbReference type="InterPro" id="IPR038359">
    <property type="entry name" value="Connexin_N_sf"/>
</dbReference>
<dbReference type="PANTHER" id="PTHR11984">
    <property type="entry name" value="CONNEXIN"/>
    <property type="match status" value="1"/>
</dbReference>
<dbReference type="PANTHER" id="PTHR11984:SF9">
    <property type="entry name" value="GAP JUNCTION ALPHA-10 PROTEIN"/>
    <property type="match status" value="1"/>
</dbReference>
<dbReference type="Pfam" id="PF00029">
    <property type="entry name" value="Connexin"/>
    <property type="match status" value="1"/>
</dbReference>
<dbReference type="PRINTS" id="PR00206">
    <property type="entry name" value="CONNEXIN"/>
</dbReference>
<dbReference type="SMART" id="SM00037">
    <property type="entry name" value="CNX"/>
    <property type="match status" value="1"/>
</dbReference>
<dbReference type="SMART" id="SM01089">
    <property type="entry name" value="Connexin_CCC"/>
    <property type="match status" value="1"/>
</dbReference>
<dbReference type="PROSITE" id="PS00407">
    <property type="entry name" value="CONNEXINS_1"/>
    <property type="match status" value="1"/>
</dbReference>
<dbReference type="PROSITE" id="PS00408">
    <property type="entry name" value="CONNEXINS_2"/>
    <property type="match status" value="1"/>
</dbReference>
<comment type="function">
    <text evidence="1">One gap junction consists of a cluster of closely packed pairs of transmembrane channels, the connexons, through which materials of low MW diffuse from one cell to a neighboring cell. Involved in tracer coupling between horizontal cells of the retina. May play a role in the regulation of horizontal cell patterning (By similarity).</text>
</comment>
<comment type="subunit">
    <text evidence="1">A connexon is composed of a hexamer of connexins.</text>
</comment>
<comment type="subcellular location">
    <subcellularLocation>
        <location evidence="1">Cell membrane</location>
        <topology evidence="1">Multi-pass membrane protein</topology>
    </subcellularLocation>
    <subcellularLocation>
        <location evidence="1">Cell junction</location>
        <location evidence="1">Gap junction</location>
    </subcellularLocation>
</comment>
<comment type="tissue specificity">
    <text evidence="4">Expressed in skeletal muscle and heart.</text>
</comment>
<comment type="similarity">
    <text evidence="5">Belongs to the connexin family. Alpha-type (group II) subfamily.</text>
</comment>
<accession>Q969M2</accession>
<feature type="chain" id="PRO_0000312989" description="Gap junction alpha-10 protein">
    <location>
        <begin position="1"/>
        <end position="543"/>
    </location>
</feature>
<feature type="topological domain" description="Cytoplasmic" evidence="2">
    <location>
        <begin position="1"/>
        <end position="16"/>
    </location>
</feature>
<feature type="transmembrane region" description="Helical" evidence="2">
    <location>
        <begin position="17"/>
        <end position="37"/>
    </location>
</feature>
<feature type="topological domain" description="Extracellular" evidence="2">
    <location>
        <begin position="38"/>
        <end position="76"/>
    </location>
</feature>
<feature type="transmembrane region" description="Helical" evidence="2">
    <location>
        <begin position="77"/>
        <end position="97"/>
    </location>
</feature>
<feature type="topological domain" description="Cytoplasmic" evidence="2">
    <location>
        <begin position="98"/>
        <end position="165"/>
    </location>
</feature>
<feature type="transmembrane region" description="Helical" evidence="2">
    <location>
        <begin position="166"/>
        <end position="186"/>
    </location>
</feature>
<feature type="topological domain" description="Extracellular" evidence="2">
    <location>
        <begin position="187"/>
        <end position="209"/>
    </location>
</feature>
<feature type="transmembrane region" description="Helical" evidence="2">
    <location>
        <begin position="210"/>
        <end position="230"/>
    </location>
</feature>
<feature type="topological domain" description="Cytoplasmic" evidence="2">
    <location>
        <begin position="231"/>
        <end position="543"/>
    </location>
</feature>
<feature type="region of interest" description="Disordered" evidence="3">
    <location>
        <begin position="306"/>
        <end position="359"/>
    </location>
</feature>
<feature type="region of interest" description="Disordered" evidence="3">
    <location>
        <begin position="379"/>
        <end position="424"/>
    </location>
</feature>
<feature type="compositionally biased region" description="Basic and acidic residues" evidence="3">
    <location>
        <begin position="317"/>
        <end position="328"/>
    </location>
</feature>
<feature type="compositionally biased region" description="Polar residues" evidence="3">
    <location>
        <begin position="344"/>
        <end position="359"/>
    </location>
</feature>
<feature type="compositionally biased region" description="Basic and acidic residues" evidence="3">
    <location>
        <begin position="400"/>
        <end position="413"/>
    </location>
</feature>
<sequence length="543" mass="61872">MGDWNLLGGILEEVHSHSTIVGKIWLTILFIFRMLVLRVAAEDVWDDEQSAFACNTRQPGCNNICYDDAFPISLIRFWVLQIIFVSSPSLVYMGHALYRLRAFEKDRQRKKSHLRAQMENPDLDLEEQQRIDRELRRLEEQKRIHKVPLKGCLLRTYVLHILTRSVLEVGFMIGQYILYGFQMHPLYKCTQPPCPNAVDCFVSRPTEKTIFMLFMHSIAAISLLLNILEIFHLGIRKIMRTLYKKSSSEGIEDETGPPFHLKKYSVAQQCMICSSLPERISPLQANNQQQVIRVNVPKSKTMWQIPQPRQLEVDPSNGKKDWSEKDQHSGQLHVHSPCPWAGSAGNQHLGQQSDHSSFGLQNTMSQSWLGTTTAPRNCPSFAVGTWEQSQDPEPSGEPLTDLHSHCRDSEGSMRESGVWIDRSRPGSRKASFLSRLLSEKRHLHSDSGSSGSRNSSCLDFPHWENSPSPLPSVTGHRTSMVRQAALPIMELSQELFHSGCFLFPFFLPGVCMYVCVDREADGGGDYLWRDKIIHSIHSVKFNS</sequence>
<name>CXA10_HUMAN</name>
<gene>
    <name type="primary">GJA10</name>
    <name type="synonym">CX62</name>
</gene>